<protein>
    <recommendedName>
        <fullName evidence="1">Large ribosomal subunit protein eL21</fullName>
    </recommendedName>
    <alternativeName>
        <fullName evidence="2">50S ribosomal protein L21e</fullName>
    </alternativeName>
</protein>
<gene>
    <name evidence="1" type="primary">rpl21e</name>
    <name type="ordered locus">Pars_1748</name>
</gene>
<keyword id="KW-0687">Ribonucleoprotein</keyword>
<keyword id="KW-0689">Ribosomal protein</keyword>
<sequence length="100" mass="11371">MVKRTHGYRYKSRKLLSKKPRERGVPGLSRLLYEYKPGDKVVIDVDPTFVSTAPHRRYQGKVGVVIGTRGRAYVIETYIGDKKKIIVTTPEHLKPFQGGS</sequence>
<feature type="chain" id="PRO_1000007127" description="Large ribosomal subunit protein eL21">
    <location>
        <begin position="1"/>
        <end position="100"/>
    </location>
</feature>
<proteinExistence type="inferred from homology"/>
<reference key="1">
    <citation type="submission" date="2007-04" db="EMBL/GenBank/DDBJ databases">
        <title>Complete sequence of Pyrobaculum arsenaticum DSM 13514.</title>
        <authorList>
            <consortium name="US DOE Joint Genome Institute"/>
            <person name="Copeland A."/>
            <person name="Lucas S."/>
            <person name="Lapidus A."/>
            <person name="Barry K."/>
            <person name="Glavina del Rio T."/>
            <person name="Dalin E."/>
            <person name="Tice H."/>
            <person name="Pitluck S."/>
            <person name="Chain P."/>
            <person name="Malfatti S."/>
            <person name="Shin M."/>
            <person name="Vergez L."/>
            <person name="Schmutz J."/>
            <person name="Larimer F."/>
            <person name="Land M."/>
            <person name="Hauser L."/>
            <person name="Kyrpides N."/>
            <person name="Mikhailova N."/>
            <person name="Cozen A.E."/>
            <person name="Fitz-Gibbon S.T."/>
            <person name="House C.H."/>
            <person name="Saltikov C."/>
            <person name="Lowe T.M."/>
            <person name="Richardson P."/>
        </authorList>
    </citation>
    <scope>NUCLEOTIDE SEQUENCE [LARGE SCALE GENOMIC DNA]</scope>
    <source>
        <strain>ATCC 700994 / DSM 13514 / JCM 11321 / PZ6</strain>
    </source>
</reference>
<dbReference type="EMBL" id="CP000660">
    <property type="protein sequence ID" value="ABP51299.1"/>
    <property type="molecule type" value="Genomic_DNA"/>
</dbReference>
<dbReference type="SMR" id="A4WLN2"/>
<dbReference type="STRING" id="340102.Pars_1748"/>
<dbReference type="KEGG" id="pas:Pars_1748"/>
<dbReference type="HOGENOM" id="CLU_103610_1_1_2"/>
<dbReference type="OrthoDB" id="6295at2157"/>
<dbReference type="PhylomeDB" id="A4WLN2"/>
<dbReference type="Proteomes" id="UP000001567">
    <property type="component" value="Chromosome"/>
</dbReference>
<dbReference type="GO" id="GO:1990904">
    <property type="term" value="C:ribonucleoprotein complex"/>
    <property type="evidence" value="ECO:0007669"/>
    <property type="project" value="UniProtKB-KW"/>
</dbReference>
<dbReference type="GO" id="GO:0005840">
    <property type="term" value="C:ribosome"/>
    <property type="evidence" value="ECO:0007669"/>
    <property type="project" value="UniProtKB-KW"/>
</dbReference>
<dbReference type="GO" id="GO:0003735">
    <property type="term" value="F:structural constituent of ribosome"/>
    <property type="evidence" value="ECO:0007669"/>
    <property type="project" value="InterPro"/>
</dbReference>
<dbReference type="GO" id="GO:0006412">
    <property type="term" value="P:translation"/>
    <property type="evidence" value="ECO:0007669"/>
    <property type="project" value="UniProtKB-UniRule"/>
</dbReference>
<dbReference type="FunFam" id="2.30.30.70:FF:000001">
    <property type="entry name" value="60S ribosomal protein L21"/>
    <property type="match status" value="1"/>
</dbReference>
<dbReference type="Gene3D" id="2.30.30.70">
    <property type="entry name" value="Ribosomal protein L21"/>
    <property type="match status" value="1"/>
</dbReference>
<dbReference type="HAMAP" id="MF_00369">
    <property type="entry name" value="Ribosomal_eL21"/>
    <property type="match status" value="1"/>
</dbReference>
<dbReference type="InterPro" id="IPR001147">
    <property type="entry name" value="Ribosomal_eL21"/>
</dbReference>
<dbReference type="InterPro" id="IPR022856">
    <property type="entry name" value="Ribosomal_eL21_arc"/>
</dbReference>
<dbReference type="InterPro" id="IPR018259">
    <property type="entry name" value="Ribosomal_eL21_CS"/>
</dbReference>
<dbReference type="InterPro" id="IPR036948">
    <property type="entry name" value="Ribosomal_eL21_sf"/>
</dbReference>
<dbReference type="InterPro" id="IPR008991">
    <property type="entry name" value="Translation_prot_SH3-like_sf"/>
</dbReference>
<dbReference type="NCBIfam" id="NF003303">
    <property type="entry name" value="PRK04306.1"/>
    <property type="match status" value="1"/>
</dbReference>
<dbReference type="PANTHER" id="PTHR20981">
    <property type="entry name" value="60S RIBOSOMAL PROTEIN L21"/>
    <property type="match status" value="1"/>
</dbReference>
<dbReference type="Pfam" id="PF01157">
    <property type="entry name" value="Ribosomal_L21e"/>
    <property type="match status" value="1"/>
</dbReference>
<dbReference type="SUPFAM" id="SSF50104">
    <property type="entry name" value="Translation proteins SH3-like domain"/>
    <property type="match status" value="1"/>
</dbReference>
<dbReference type="PROSITE" id="PS01171">
    <property type="entry name" value="RIBOSOMAL_L21E"/>
    <property type="match status" value="1"/>
</dbReference>
<evidence type="ECO:0000255" key="1">
    <source>
        <dbReference type="HAMAP-Rule" id="MF_00369"/>
    </source>
</evidence>
<evidence type="ECO:0000305" key="2"/>
<accession>A4WLN2</accession>
<name>RL21_PYRAR</name>
<organism>
    <name type="scientific">Pyrobaculum arsenaticum (strain DSM 13514 / JCM 11321 / PZ6)</name>
    <dbReference type="NCBI Taxonomy" id="340102"/>
    <lineage>
        <taxon>Archaea</taxon>
        <taxon>Thermoproteota</taxon>
        <taxon>Thermoprotei</taxon>
        <taxon>Thermoproteales</taxon>
        <taxon>Thermoproteaceae</taxon>
        <taxon>Pyrobaculum</taxon>
    </lineage>
</organism>
<comment type="similarity">
    <text evidence="1">Belongs to the eukaryotic ribosomal protein eL21 family.</text>
</comment>